<accession>Q4A0J9</accession>
<protein>
    <recommendedName>
        <fullName evidence="1">Urease accessory protein UreD</fullName>
    </recommendedName>
</protein>
<feature type="chain" id="PRO_0000346606" description="Urease accessory protein UreD">
    <location>
        <begin position="1"/>
        <end position="280"/>
    </location>
</feature>
<sequence>MSNNKQAWTGQLDLSVFNNGKKSVARDVFFEKALKVMRPVYLNQSDIPTFYIVNVGGGYLDGDRYTMNFNIDSDAKVILTSQGATKIYKTLNDHVEQYQTFNIKNNGYAEYVGDPIIAFENAKFYQHNVFNLESTASLFYTDILTPGYSKSDKRFSYTYMHLLNEIYVDDALVTFDNMLLDPQKQNVDGLGYMEDYTHLGSCYFIHPSVNQKFIEQVYEEIKHFQHKYDCRFGITHLPTHGFSLRILSNKTQVIESIITAVQCYVVKQIFDRDVDFLRKY</sequence>
<gene>
    <name evidence="1" type="primary">ureD</name>
    <name type="ordered locus">SSP0259</name>
</gene>
<comment type="function">
    <text evidence="1">Required for maturation of urease via the functional incorporation of the urease nickel metallocenter.</text>
</comment>
<comment type="subunit">
    <text evidence="1">UreD, UreF and UreG form a complex that acts as a GTP-hydrolysis-dependent molecular chaperone, activating the urease apoprotein by helping to assemble the nickel containing metallocenter of UreC. The UreE protein probably delivers the nickel.</text>
</comment>
<comment type="subcellular location">
    <subcellularLocation>
        <location evidence="1">Cytoplasm</location>
    </subcellularLocation>
</comment>
<comment type="similarity">
    <text evidence="1">Belongs to the UreD family.</text>
</comment>
<proteinExistence type="inferred from homology"/>
<evidence type="ECO:0000255" key="1">
    <source>
        <dbReference type="HAMAP-Rule" id="MF_01384"/>
    </source>
</evidence>
<reference key="1">
    <citation type="journal article" date="2005" name="Proc. Natl. Acad. Sci. U.S.A.">
        <title>Whole genome sequence of Staphylococcus saprophyticus reveals the pathogenesis of uncomplicated urinary tract infection.</title>
        <authorList>
            <person name="Kuroda M."/>
            <person name="Yamashita A."/>
            <person name="Hirakawa H."/>
            <person name="Kumano M."/>
            <person name="Morikawa K."/>
            <person name="Higashide M."/>
            <person name="Maruyama A."/>
            <person name="Inose Y."/>
            <person name="Matoba K."/>
            <person name="Toh H."/>
            <person name="Kuhara S."/>
            <person name="Hattori M."/>
            <person name="Ohta T."/>
        </authorList>
    </citation>
    <scope>NUCLEOTIDE SEQUENCE [LARGE SCALE GENOMIC DNA]</scope>
    <source>
        <strain>ATCC 15305 / DSM 20229 / NCIMB 8711 / NCTC 7292 / S-41</strain>
    </source>
</reference>
<dbReference type="EMBL" id="AP008934">
    <property type="protein sequence ID" value="BAE17404.1"/>
    <property type="molecule type" value="Genomic_DNA"/>
</dbReference>
<dbReference type="RefSeq" id="WP_002482214.1">
    <property type="nucleotide sequence ID" value="NZ_MTGA01000037.1"/>
</dbReference>
<dbReference type="SMR" id="Q4A0J9"/>
<dbReference type="DNASU" id="3616065"/>
<dbReference type="KEGG" id="ssp:SSP0259"/>
<dbReference type="eggNOG" id="COG0829">
    <property type="taxonomic scope" value="Bacteria"/>
</dbReference>
<dbReference type="HOGENOM" id="CLU_056339_5_0_9"/>
<dbReference type="OrthoDB" id="9807968at2"/>
<dbReference type="Proteomes" id="UP000006371">
    <property type="component" value="Chromosome"/>
</dbReference>
<dbReference type="GO" id="GO:0005737">
    <property type="term" value="C:cytoplasm"/>
    <property type="evidence" value="ECO:0007669"/>
    <property type="project" value="UniProtKB-SubCell"/>
</dbReference>
<dbReference type="GO" id="GO:0016151">
    <property type="term" value="F:nickel cation binding"/>
    <property type="evidence" value="ECO:0007669"/>
    <property type="project" value="UniProtKB-UniRule"/>
</dbReference>
<dbReference type="HAMAP" id="MF_01384">
    <property type="entry name" value="UreD"/>
    <property type="match status" value="1"/>
</dbReference>
<dbReference type="InterPro" id="IPR002669">
    <property type="entry name" value="UreD"/>
</dbReference>
<dbReference type="PANTHER" id="PTHR33643">
    <property type="entry name" value="UREASE ACCESSORY PROTEIN D"/>
    <property type="match status" value="1"/>
</dbReference>
<dbReference type="PANTHER" id="PTHR33643:SF1">
    <property type="entry name" value="UREASE ACCESSORY PROTEIN D"/>
    <property type="match status" value="1"/>
</dbReference>
<dbReference type="Pfam" id="PF01774">
    <property type="entry name" value="UreD"/>
    <property type="match status" value="1"/>
</dbReference>
<organism>
    <name type="scientific">Staphylococcus saprophyticus subsp. saprophyticus (strain ATCC 15305 / DSM 20229 / NCIMB 8711 / NCTC 7292 / S-41)</name>
    <dbReference type="NCBI Taxonomy" id="342451"/>
    <lineage>
        <taxon>Bacteria</taxon>
        <taxon>Bacillati</taxon>
        <taxon>Bacillota</taxon>
        <taxon>Bacilli</taxon>
        <taxon>Bacillales</taxon>
        <taxon>Staphylococcaceae</taxon>
        <taxon>Staphylococcus</taxon>
    </lineage>
</organism>
<name>URED_STAS1</name>
<keyword id="KW-0143">Chaperone</keyword>
<keyword id="KW-0963">Cytoplasm</keyword>
<keyword id="KW-0996">Nickel insertion</keyword>
<keyword id="KW-1185">Reference proteome</keyword>